<proteinExistence type="inferred from homology"/>
<name>DAPA_CLOPS</name>
<sequence length="291" mass="31897">MFKGSCVALITPFTEDGVNYEELRKLLEWHIKNHTDAILVCGTTGEGSTMTLEEKKEVIKFSVEVVNKRVPVIAGTGTNNTKASIELSKYAEEVGADMVLIITPYYNKTSQKGLYAHFSAINDAINIPIMLYNVPSRTGMNITPLMLDKLANLNNVVAIKEASGDLSQVAKMAELCGDRIAIYSGNDDQIVPILSLGGAGVVSVLANILPEETHNICEKYFLGEVIESRNLQLKYLSLANSLFIETNPIPVKTAMNLMNFNCGPLRLPLCEMEDSNLVILEENLKANGLIK</sequence>
<organism>
    <name type="scientific">Clostridium perfringens (strain SM101 / Type A)</name>
    <dbReference type="NCBI Taxonomy" id="289380"/>
    <lineage>
        <taxon>Bacteria</taxon>
        <taxon>Bacillati</taxon>
        <taxon>Bacillota</taxon>
        <taxon>Clostridia</taxon>
        <taxon>Eubacteriales</taxon>
        <taxon>Clostridiaceae</taxon>
        <taxon>Clostridium</taxon>
    </lineage>
</organism>
<evidence type="ECO:0000255" key="1">
    <source>
        <dbReference type="HAMAP-Rule" id="MF_00418"/>
    </source>
</evidence>
<evidence type="ECO:0000305" key="2"/>
<feature type="chain" id="PRO_1000050180" description="4-hydroxy-tetrahydrodipicolinate synthase">
    <location>
        <begin position="1"/>
        <end position="291"/>
    </location>
</feature>
<feature type="active site" description="Proton donor/acceptor" evidence="1">
    <location>
        <position position="132"/>
    </location>
</feature>
<feature type="active site" description="Schiff-base intermediate with substrate" evidence="1">
    <location>
        <position position="160"/>
    </location>
</feature>
<feature type="binding site" evidence="1">
    <location>
        <position position="44"/>
    </location>
    <ligand>
        <name>pyruvate</name>
        <dbReference type="ChEBI" id="CHEBI:15361"/>
    </ligand>
</feature>
<feature type="binding site" evidence="1">
    <location>
        <position position="202"/>
    </location>
    <ligand>
        <name>pyruvate</name>
        <dbReference type="ChEBI" id="CHEBI:15361"/>
    </ligand>
</feature>
<feature type="site" description="Part of a proton relay during catalysis" evidence="1">
    <location>
        <position position="43"/>
    </location>
</feature>
<feature type="site" description="Part of a proton relay during catalysis" evidence="1">
    <location>
        <position position="106"/>
    </location>
</feature>
<gene>
    <name evidence="1" type="primary">dapA</name>
    <name type="ordered locus">CPR_1872</name>
</gene>
<dbReference type="EC" id="4.3.3.7" evidence="1"/>
<dbReference type="EMBL" id="CP000312">
    <property type="protein sequence ID" value="ABG86666.1"/>
    <property type="molecule type" value="Genomic_DNA"/>
</dbReference>
<dbReference type="RefSeq" id="WP_011592754.1">
    <property type="nucleotide sequence ID" value="NC_008262.1"/>
</dbReference>
<dbReference type="SMR" id="Q0SRS5"/>
<dbReference type="KEGG" id="cpr:CPR_1872"/>
<dbReference type="UniPathway" id="UPA00034">
    <property type="reaction ID" value="UER00017"/>
</dbReference>
<dbReference type="Proteomes" id="UP000001824">
    <property type="component" value="Chromosome"/>
</dbReference>
<dbReference type="GO" id="GO:0005829">
    <property type="term" value="C:cytosol"/>
    <property type="evidence" value="ECO:0007669"/>
    <property type="project" value="TreeGrafter"/>
</dbReference>
<dbReference type="GO" id="GO:0008840">
    <property type="term" value="F:4-hydroxy-tetrahydrodipicolinate synthase activity"/>
    <property type="evidence" value="ECO:0007669"/>
    <property type="project" value="UniProtKB-UniRule"/>
</dbReference>
<dbReference type="GO" id="GO:0019877">
    <property type="term" value="P:diaminopimelate biosynthetic process"/>
    <property type="evidence" value="ECO:0007669"/>
    <property type="project" value="UniProtKB-UniRule"/>
</dbReference>
<dbReference type="GO" id="GO:0009089">
    <property type="term" value="P:lysine biosynthetic process via diaminopimelate"/>
    <property type="evidence" value="ECO:0007669"/>
    <property type="project" value="UniProtKB-UniRule"/>
</dbReference>
<dbReference type="CDD" id="cd00950">
    <property type="entry name" value="DHDPS"/>
    <property type="match status" value="1"/>
</dbReference>
<dbReference type="Gene3D" id="3.20.20.70">
    <property type="entry name" value="Aldolase class I"/>
    <property type="match status" value="1"/>
</dbReference>
<dbReference type="HAMAP" id="MF_00418">
    <property type="entry name" value="DapA"/>
    <property type="match status" value="1"/>
</dbReference>
<dbReference type="InterPro" id="IPR013785">
    <property type="entry name" value="Aldolase_TIM"/>
</dbReference>
<dbReference type="InterPro" id="IPR005263">
    <property type="entry name" value="DapA"/>
</dbReference>
<dbReference type="InterPro" id="IPR002220">
    <property type="entry name" value="DapA-like"/>
</dbReference>
<dbReference type="InterPro" id="IPR020625">
    <property type="entry name" value="Schiff_base-form_aldolases_AS"/>
</dbReference>
<dbReference type="InterPro" id="IPR020624">
    <property type="entry name" value="Schiff_base-form_aldolases_CS"/>
</dbReference>
<dbReference type="NCBIfam" id="TIGR00674">
    <property type="entry name" value="dapA"/>
    <property type="match status" value="1"/>
</dbReference>
<dbReference type="PANTHER" id="PTHR12128:SF66">
    <property type="entry name" value="4-HYDROXY-2-OXOGLUTARATE ALDOLASE, MITOCHONDRIAL"/>
    <property type="match status" value="1"/>
</dbReference>
<dbReference type="PANTHER" id="PTHR12128">
    <property type="entry name" value="DIHYDRODIPICOLINATE SYNTHASE"/>
    <property type="match status" value="1"/>
</dbReference>
<dbReference type="Pfam" id="PF00701">
    <property type="entry name" value="DHDPS"/>
    <property type="match status" value="1"/>
</dbReference>
<dbReference type="PIRSF" id="PIRSF001365">
    <property type="entry name" value="DHDPS"/>
    <property type="match status" value="1"/>
</dbReference>
<dbReference type="PRINTS" id="PR00146">
    <property type="entry name" value="DHPICSNTHASE"/>
</dbReference>
<dbReference type="SMART" id="SM01130">
    <property type="entry name" value="DHDPS"/>
    <property type="match status" value="1"/>
</dbReference>
<dbReference type="SUPFAM" id="SSF51569">
    <property type="entry name" value="Aldolase"/>
    <property type="match status" value="1"/>
</dbReference>
<dbReference type="PROSITE" id="PS00665">
    <property type="entry name" value="DHDPS_1"/>
    <property type="match status" value="1"/>
</dbReference>
<dbReference type="PROSITE" id="PS00666">
    <property type="entry name" value="DHDPS_2"/>
    <property type="match status" value="1"/>
</dbReference>
<reference key="1">
    <citation type="journal article" date="2006" name="Genome Res.">
        <title>Skewed genomic variability in strains of the toxigenic bacterial pathogen, Clostridium perfringens.</title>
        <authorList>
            <person name="Myers G.S.A."/>
            <person name="Rasko D.A."/>
            <person name="Cheung J.K."/>
            <person name="Ravel J."/>
            <person name="Seshadri R."/>
            <person name="DeBoy R.T."/>
            <person name="Ren Q."/>
            <person name="Varga J."/>
            <person name="Awad M.M."/>
            <person name="Brinkac L.M."/>
            <person name="Daugherty S.C."/>
            <person name="Haft D.H."/>
            <person name="Dodson R.J."/>
            <person name="Madupu R."/>
            <person name="Nelson W.C."/>
            <person name="Rosovitz M.J."/>
            <person name="Sullivan S.A."/>
            <person name="Khouri H."/>
            <person name="Dimitrov G.I."/>
            <person name="Watkins K.L."/>
            <person name="Mulligan S."/>
            <person name="Benton J."/>
            <person name="Radune D."/>
            <person name="Fisher D.J."/>
            <person name="Atkins H.S."/>
            <person name="Hiscox T."/>
            <person name="Jost B.H."/>
            <person name="Billington S.J."/>
            <person name="Songer J.G."/>
            <person name="McClane B.A."/>
            <person name="Titball R.W."/>
            <person name="Rood J.I."/>
            <person name="Melville S.B."/>
            <person name="Paulsen I.T."/>
        </authorList>
    </citation>
    <scope>NUCLEOTIDE SEQUENCE [LARGE SCALE GENOMIC DNA]</scope>
    <source>
        <strain>SM101 / Type A</strain>
    </source>
</reference>
<protein>
    <recommendedName>
        <fullName evidence="1">4-hydroxy-tetrahydrodipicolinate synthase</fullName>
        <shortName evidence="1">HTPA synthase</shortName>
        <ecNumber evidence="1">4.3.3.7</ecNumber>
    </recommendedName>
</protein>
<accession>Q0SRS5</accession>
<keyword id="KW-0028">Amino-acid biosynthesis</keyword>
<keyword id="KW-0963">Cytoplasm</keyword>
<keyword id="KW-0220">Diaminopimelate biosynthesis</keyword>
<keyword id="KW-0456">Lyase</keyword>
<keyword id="KW-0457">Lysine biosynthesis</keyword>
<keyword id="KW-0704">Schiff base</keyword>
<comment type="function">
    <text evidence="1">Catalyzes the condensation of (S)-aspartate-beta-semialdehyde [(S)-ASA] and pyruvate to 4-hydroxy-tetrahydrodipicolinate (HTPA).</text>
</comment>
<comment type="catalytic activity">
    <reaction evidence="1">
        <text>L-aspartate 4-semialdehyde + pyruvate = (2S,4S)-4-hydroxy-2,3,4,5-tetrahydrodipicolinate + H2O + H(+)</text>
        <dbReference type="Rhea" id="RHEA:34171"/>
        <dbReference type="ChEBI" id="CHEBI:15361"/>
        <dbReference type="ChEBI" id="CHEBI:15377"/>
        <dbReference type="ChEBI" id="CHEBI:15378"/>
        <dbReference type="ChEBI" id="CHEBI:67139"/>
        <dbReference type="ChEBI" id="CHEBI:537519"/>
        <dbReference type="EC" id="4.3.3.7"/>
    </reaction>
</comment>
<comment type="pathway">
    <text evidence="1">Amino-acid biosynthesis; L-lysine biosynthesis via DAP pathway; (S)-tetrahydrodipicolinate from L-aspartate: step 3/4.</text>
</comment>
<comment type="subunit">
    <text evidence="1">Homotetramer; dimer of dimers.</text>
</comment>
<comment type="subcellular location">
    <subcellularLocation>
        <location evidence="1">Cytoplasm</location>
    </subcellularLocation>
</comment>
<comment type="similarity">
    <text evidence="1">Belongs to the DapA family.</text>
</comment>
<comment type="caution">
    <text evidence="2">Was originally thought to be a dihydrodipicolinate synthase (DHDPS), catalyzing the condensation of (S)-aspartate-beta-semialdehyde [(S)-ASA] and pyruvate to dihydrodipicolinate (DHDP). However, it was shown in E.coli that the product of the enzymatic reaction is not dihydrodipicolinate but in fact (4S)-4-hydroxy-2,3,4,5-tetrahydro-(2S)-dipicolinic acid (HTPA), and that the consecutive dehydration reaction leading to DHDP is not spontaneous but catalyzed by DapB.</text>
</comment>